<gene>
    <name evidence="1" type="primary">secB</name>
    <name type="ordered locus">BPP0292</name>
</gene>
<name>SECB_BORPA</name>
<accession>Q7W1Q9</accession>
<proteinExistence type="inferred from homology"/>
<protein>
    <recommendedName>
        <fullName evidence="1">Protein-export protein SecB</fullName>
    </recommendedName>
</protein>
<dbReference type="EMBL" id="BX640423">
    <property type="protein sequence ID" value="CAE40033.1"/>
    <property type="molecule type" value="Genomic_DNA"/>
</dbReference>
<dbReference type="RefSeq" id="WP_003807422.1">
    <property type="nucleotide sequence ID" value="NC_002928.3"/>
</dbReference>
<dbReference type="SMR" id="Q7W1Q9"/>
<dbReference type="GeneID" id="93206523"/>
<dbReference type="KEGG" id="bpa:BPP0292"/>
<dbReference type="HOGENOM" id="CLU_111574_1_0_4"/>
<dbReference type="Proteomes" id="UP000001421">
    <property type="component" value="Chromosome"/>
</dbReference>
<dbReference type="GO" id="GO:0005737">
    <property type="term" value="C:cytoplasm"/>
    <property type="evidence" value="ECO:0007669"/>
    <property type="project" value="UniProtKB-SubCell"/>
</dbReference>
<dbReference type="GO" id="GO:0051082">
    <property type="term" value="F:unfolded protein binding"/>
    <property type="evidence" value="ECO:0007669"/>
    <property type="project" value="InterPro"/>
</dbReference>
<dbReference type="GO" id="GO:0006457">
    <property type="term" value="P:protein folding"/>
    <property type="evidence" value="ECO:0007669"/>
    <property type="project" value="UniProtKB-UniRule"/>
</dbReference>
<dbReference type="GO" id="GO:0051262">
    <property type="term" value="P:protein tetramerization"/>
    <property type="evidence" value="ECO:0007669"/>
    <property type="project" value="InterPro"/>
</dbReference>
<dbReference type="GO" id="GO:0015031">
    <property type="term" value="P:protein transport"/>
    <property type="evidence" value="ECO:0007669"/>
    <property type="project" value="UniProtKB-UniRule"/>
</dbReference>
<dbReference type="Gene3D" id="3.10.420.10">
    <property type="entry name" value="SecB-like"/>
    <property type="match status" value="1"/>
</dbReference>
<dbReference type="HAMAP" id="MF_00821">
    <property type="entry name" value="SecB"/>
    <property type="match status" value="1"/>
</dbReference>
<dbReference type="InterPro" id="IPR003708">
    <property type="entry name" value="SecB"/>
</dbReference>
<dbReference type="InterPro" id="IPR035958">
    <property type="entry name" value="SecB-like_sf"/>
</dbReference>
<dbReference type="NCBIfam" id="NF004394">
    <property type="entry name" value="PRK05751.1-5"/>
    <property type="match status" value="1"/>
</dbReference>
<dbReference type="NCBIfam" id="TIGR00809">
    <property type="entry name" value="secB"/>
    <property type="match status" value="1"/>
</dbReference>
<dbReference type="PANTHER" id="PTHR36918">
    <property type="match status" value="1"/>
</dbReference>
<dbReference type="PANTHER" id="PTHR36918:SF1">
    <property type="entry name" value="PROTEIN-EXPORT PROTEIN SECB"/>
    <property type="match status" value="1"/>
</dbReference>
<dbReference type="Pfam" id="PF02556">
    <property type="entry name" value="SecB"/>
    <property type="match status" value="1"/>
</dbReference>
<dbReference type="PRINTS" id="PR01594">
    <property type="entry name" value="SECBCHAPRONE"/>
</dbReference>
<dbReference type="SUPFAM" id="SSF54611">
    <property type="entry name" value="SecB-like"/>
    <property type="match status" value="1"/>
</dbReference>
<evidence type="ECO:0000255" key="1">
    <source>
        <dbReference type="HAMAP-Rule" id="MF_00821"/>
    </source>
</evidence>
<evidence type="ECO:0000256" key="2">
    <source>
        <dbReference type="SAM" id="MobiDB-lite"/>
    </source>
</evidence>
<reference key="1">
    <citation type="journal article" date="2003" name="Nat. Genet.">
        <title>Comparative analysis of the genome sequences of Bordetella pertussis, Bordetella parapertussis and Bordetella bronchiseptica.</title>
        <authorList>
            <person name="Parkhill J."/>
            <person name="Sebaihia M."/>
            <person name="Preston A."/>
            <person name="Murphy L.D."/>
            <person name="Thomson N.R."/>
            <person name="Harris D.E."/>
            <person name="Holden M.T.G."/>
            <person name="Churcher C.M."/>
            <person name="Bentley S.D."/>
            <person name="Mungall K.L."/>
            <person name="Cerdeno-Tarraga A.-M."/>
            <person name="Temple L."/>
            <person name="James K.D."/>
            <person name="Harris B."/>
            <person name="Quail M.A."/>
            <person name="Achtman M."/>
            <person name="Atkin R."/>
            <person name="Baker S."/>
            <person name="Basham D."/>
            <person name="Bason N."/>
            <person name="Cherevach I."/>
            <person name="Chillingworth T."/>
            <person name="Collins M."/>
            <person name="Cronin A."/>
            <person name="Davis P."/>
            <person name="Doggett J."/>
            <person name="Feltwell T."/>
            <person name="Goble A."/>
            <person name="Hamlin N."/>
            <person name="Hauser H."/>
            <person name="Holroyd S."/>
            <person name="Jagels K."/>
            <person name="Leather S."/>
            <person name="Moule S."/>
            <person name="Norberczak H."/>
            <person name="O'Neil S."/>
            <person name="Ormond D."/>
            <person name="Price C."/>
            <person name="Rabbinowitsch E."/>
            <person name="Rutter S."/>
            <person name="Sanders M."/>
            <person name="Saunders D."/>
            <person name="Seeger K."/>
            <person name="Sharp S."/>
            <person name="Simmonds M."/>
            <person name="Skelton J."/>
            <person name="Squares R."/>
            <person name="Squares S."/>
            <person name="Stevens K."/>
            <person name="Unwin L."/>
            <person name="Whitehead S."/>
            <person name="Barrell B.G."/>
            <person name="Maskell D.J."/>
        </authorList>
    </citation>
    <scope>NUCLEOTIDE SEQUENCE [LARGE SCALE GENOMIC DNA]</scope>
    <source>
        <strain>12822 / ATCC BAA-587 / NCTC 13253</strain>
    </source>
</reference>
<sequence>MADQDQTNQQAGSDAPSFNLQRVYLKDLSLEMPNAPHVFLEQEAPQVEVSINVGGQRLAETVFESTVTVTVTTRVNDKVLYLVEGTQAGIFELANIPAEQMDPLLGIVCPTMLYPYLRANVADAITRTSLPALHLAEVNFQALYEQRLAEMAQQQPDAANGNDSGIILPPGATRQ</sequence>
<feature type="chain" id="PRO_0000055349" description="Protein-export protein SecB">
    <location>
        <begin position="1"/>
        <end position="175"/>
    </location>
</feature>
<feature type="region of interest" description="Disordered" evidence="2">
    <location>
        <begin position="153"/>
        <end position="175"/>
    </location>
</feature>
<feature type="compositionally biased region" description="Polar residues" evidence="2">
    <location>
        <begin position="153"/>
        <end position="163"/>
    </location>
</feature>
<keyword id="KW-0143">Chaperone</keyword>
<keyword id="KW-0963">Cytoplasm</keyword>
<keyword id="KW-0653">Protein transport</keyword>
<keyword id="KW-0811">Translocation</keyword>
<keyword id="KW-0813">Transport</keyword>
<organism>
    <name type="scientific">Bordetella parapertussis (strain 12822 / ATCC BAA-587 / NCTC 13253)</name>
    <dbReference type="NCBI Taxonomy" id="257311"/>
    <lineage>
        <taxon>Bacteria</taxon>
        <taxon>Pseudomonadati</taxon>
        <taxon>Pseudomonadota</taxon>
        <taxon>Betaproteobacteria</taxon>
        <taxon>Burkholderiales</taxon>
        <taxon>Alcaligenaceae</taxon>
        <taxon>Bordetella</taxon>
    </lineage>
</organism>
<comment type="function">
    <text evidence="1">One of the proteins required for the normal export of preproteins out of the cell cytoplasm. It is a molecular chaperone that binds to a subset of precursor proteins, maintaining them in a translocation-competent state. It also specifically binds to its receptor SecA.</text>
</comment>
<comment type="subunit">
    <text evidence="1">Homotetramer, a dimer of dimers. One homotetramer interacts with 1 SecA dimer.</text>
</comment>
<comment type="subcellular location">
    <subcellularLocation>
        <location evidence="1">Cytoplasm</location>
    </subcellularLocation>
</comment>
<comment type="similarity">
    <text evidence="1">Belongs to the SecB family.</text>
</comment>